<comment type="function">
    <text evidence="1">Probable GPI-anchored cell wall protein that may be involved in cell wall organization, hyphal growth, as well as in virulence.</text>
</comment>
<comment type="subcellular location">
    <subcellularLocation>
        <location evidence="1">Secreted</location>
        <location evidence="1">Cell wall</location>
    </subcellularLocation>
    <subcellularLocation>
        <location evidence="4">Membrane</location>
        <topology evidence="4">Lipid-anchor</topology>
        <topology evidence="4">GPI-anchor</topology>
    </subcellularLocation>
</comment>
<comment type="PTM">
    <text evidence="1">The GPI-anchor is attached to the protein in the endoplasmic reticulum and serves to target the protein to the cell surface. There, the glucosamine-inositol phospholipid moiety is cleaved off and the GPI-modified mannoprotein is covalently attached via its lipidless GPI glycan remnant to the 1,6-beta-glucan of the outer cell wall layer (By similarity).</text>
</comment>
<comment type="similarity">
    <text evidence="4">Belongs to the IHD1 family.</text>
</comment>
<protein>
    <recommendedName>
        <fullName>Probable cell wall protein PGA61</fullName>
    </recommendedName>
    <alternativeName>
        <fullName>Predicted GPI-anchored protein 61</fullName>
    </alternativeName>
</protein>
<sequence length="223" mass="23182">MKSGLLLAVILPVAFAVKKDQQSCNSSCVKVLQKQQESCPSGSDADCLCKLSDSDYWEPLTDCDCINPDKKLSASEIKVQICGAPSSSSTPTSSTETTSSTEAETTEAETTEQPSSSTSSNTESSKTTILETPSIQELNAESTTSVITPLTESAVAAVANTDTSTLIEPQNTEATPEVAPLIQPQLNNGSDLAQVSVQAFENGAGRAAVIGSGSLLALLLNFI</sequence>
<proteinExistence type="evidence at protein level"/>
<gene>
    <name type="primary">PGA61</name>
    <name type="ordered locus">CAALFM_C603860CA</name>
    <name type="ORF">CaO19.13185</name>
    <name type="ORF">CaO19.5762</name>
</gene>
<keyword id="KW-0134">Cell wall</keyword>
<keyword id="KW-0325">Glycoprotein</keyword>
<keyword id="KW-0336">GPI-anchor</keyword>
<keyword id="KW-0449">Lipoprotein</keyword>
<keyword id="KW-0472">Membrane</keyword>
<keyword id="KW-1185">Reference proteome</keyword>
<keyword id="KW-0964">Secreted</keyword>
<keyword id="KW-0732">Signal</keyword>
<keyword id="KW-0843">Virulence</keyword>
<feature type="signal peptide" evidence="2">
    <location>
        <begin position="1"/>
        <end position="16"/>
    </location>
</feature>
<feature type="chain" id="PRO_0000424745" description="Probable cell wall protein PGA61">
    <location>
        <begin position="17"/>
        <end position="202"/>
    </location>
</feature>
<feature type="propeptide" id="PRO_0000424746" description="Removed in mature form" evidence="2">
    <location>
        <begin position="203"/>
        <end position="223"/>
    </location>
</feature>
<feature type="region of interest" description="Disordered" evidence="3">
    <location>
        <begin position="83"/>
        <end position="134"/>
    </location>
</feature>
<feature type="compositionally biased region" description="Low complexity" evidence="3">
    <location>
        <begin position="84"/>
        <end position="103"/>
    </location>
</feature>
<feature type="compositionally biased region" description="Low complexity" evidence="3">
    <location>
        <begin position="111"/>
        <end position="128"/>
    </location>
</feature>
<feature type="lipid moiety-binding region" description="GPI-anchor amidated asparagine" evidence="2">
    <location>
        <position position="202"/>
    </location>
</feature>
<feature type="glycosylation site" description="N-linked (GlcNAc...) asparagine" evidence="2">
    <location>
        <position position="25"/>
    </location>
</feature>
<feature type="glycosylation site" description="N-linked (GlcNAc...) asparagine" evidence="2">
    <location>
        <position position="188"/>
    </location>
</feature>
<reference key="1">
    <citation type="journal article" date="2004" name="Proc. Natl. Acad. Sci. U.S.A.">
        <title>The diploid genome sequence of Candida albicans.</title>
        <authorList>
            <person name="Jones T."/>
            <person name="Federspiel N.A."/>
            <person name="Chibana H."/>
            <person name="Dungan J."/>
            <person name="Kalman S."/>
            <person name="Magee B.B."/>
            <person name="Newport G."/>
            <person name="Thorstenson Y.R."/>
            <person name="Agabian N."/>
            <person name="Magee P.T."/>
            <person name="Davis R.W."/>
            <person name="Scherer S."/>
        </authorList>
    </citation>
    <scope>NUCLEOTIDE SEQUENCE [LARGE SCALE GENOMIC DNA]</scope>
    <source>
        <strain>SC5314 / ATCC MYA-2876</strain>
    </source>
</reference>
<reference key="2">
    <citation type="journal article" date="2007" name="Genome Biol.">
        <title>Assembly of the Candida albicans genome into sixteen supercontigs aligned on the eight chromosomes.</title>
        <authorList>
            <person name="van het Hoog M."/>
            <person name="Rast T.J."/>
            <person name="Martchenko M."/>
            <person name="Grindle S."/>
            <person name="Dignard D."/>
            <person name="Hogues H."/>
            <person name="Cuomo C."/>
            <person name="Berriman M."/>
            <person name="Scherer S."/>
            <person name="Magee B.B."/>
            <person name="Whiteway M."/>
            <person name="Chibana H."/>
            <person name="Nantel A."/>
            <person name="Magee P.T."/>
        </authorList>
    </citation>
    <scope>GENOME REANNOTATION</scope>
    <source>
        <strain>SC5314 / ATCC MYA-2876</strain>
    </source>
</reference>
<reference key="3">
    <citation type="journal article" date="2013" name="Genome Biol.">
        <title>Assembly of a phased diploid Candida albicans genome facilitates allele-specific measurements and provides a simple model for repeat and indel structure.</title>
        <authorList>
            <person name="Muzzey D."/>
            <person name="Schwartz K."/>
            <person name="Weissman J.S."/>
            <person name="Sherlock G."/>
        </authorList>
    </citation>
    <scope>NUCLEOTIDE SEQUENCE [LARGE SCALE GENOMIC DNA]</scope>
    <scope>GENOME REANNOTATION</scope>
    <source>
        <strain>SC5314 / ATCC MYA-2876</strain>
    </source>
</reference>
<reference key="4">
    <citation type="journal article" date="2003" name="Yeast">
        <title>Genome-wide identification of fungal GPI proteins.</title>
        <authorList>
            <person name="De Groot P.W."/>
            <person name="Hellingwerf K.J."/>
            <person name="Klis F.M."/>
        </authorList>
    </citation>
    <scope>PREDICTION OF GPI-ANCHOR</scope>
</reference>
<name>PGA61_CANAL</name>
<accession>Q5A8I6</accession>
<accession>A0A1D8PQA1</accession>
<organism>
    <name type="scientific">Candida albicans (strain SC5314 / ATCC MYA-2876)</name>
    <name type="common">Yeast</name>
    <dbReference type="NCBI Taxonomy" id="237561"/>
    <lineage>
        <taxon>Eukaryota</taxon>
        <taxon>Fungi</taxon>
        <taxon>Dikarya</taxon>
        <taxon>Ascomycota</taxon>
        <taxon>Saccharomycotina</taxon>
        <taxon>Pichiomycetes</taxon>
        <taxon>Debaryomycetaceae</taxon>
        <taxon>Candida/Lodderomyces clade</taxon>
        <taxon>Candida</taxon>
    </lineage>
</organism>
<evidence type="ECO:0000250" key="1"/>
<evidence type="ECO:0000255" key="2"/>
<evidence type="ECO:0000256" key="3">
    <source>
        <dbReference type="SAM" id="MobiDB-lite"/>
    </source>
</evidence>
<evidence type="ECO:0000305" key="4"/>
<dbReference type="EMBL" id="CP017628">
    <property type="protein sequence ID" value="AOW30313.1"/>
    <property type="molecule type" value="Genomic_DNA"/>
</dbReference>
<dbReference type="RefSeq" id="XP_718097.2">
    <property type="nucleotide sequence ID" value="XM_713004.2"/>
</dbReference>
<dbReference type="STRING" id="237561.Q5A8I6"/>
<dbReference type="GlyCosmos" id="Q5A8I6">
    <property type="glycosylation" value="2 sites, No reported glycans"/>
</dbReference>
<dbReference type="EnsemblFungi" id="C6_03860C_A-T">
    <property type="protein sequence ID" value="C6_03860C_A-T-p1"/>
    <property type="gene ID" value="C6_03860C_A"/>
</dbReference>
<dbReference type="GeneID" id="3640292"/>
<dbReference type="KEGG" id="cal:CAALFM_C603860CA"/>
<dbReference type="CGD" id="CAL0000195894">
    <property type="gene designation" value="PGA61"/>
</dbReference>
<dbReference type="VEuPathDB" id="FungiDB:C6_03860C_A"/>
<dbReference type="HOGENOM" id="CLU_1102657_0_0_1"/>
<dbReference type="InParanoid" id="Q5A8I6"/>
<dbReference type="OrthoDB" id="4017894at2759"/>
<dbReference type="PRO" id="PR:Q5A8I6"/>
<dbReference type="Proteomes" id="UP000000559">
    <property type="component" value="Chromosome 6"/>
</dbReference>
<dbReference type="GO" id="GO:0005576">
    <property type="term" value="C:extracellular region"/>
    <property type="evidence" value="ECO:0007669"/>
    <property type="project" value="UniProtKB-KW"/>
</dbReference>
<dbReference type="GO" id="GO:0098552">
    <property type="term" value="C:side of membrane"/>
    <property type="evidence" value="ECO:0007669"/>
    <property type="project" value="UniProtKB-KW"/>
</dbReference>